<evidence type="ECO:0000255" key="1">
    <source>
        <dbReference type="HAMAP-Rule" id="MF_01365"/>
    </source>
</evidence>
<evidence type="ECO:0000305" key="2"/>
<feature type="chain" id="PRO_1000055275" description="Large ribosomal subunit protein uL6">
    <location>
        <begin position="1"/>
        <end position="179"/>
    </location>
</feature>
<reference key="1">
    <citation type="submission" date="2006-12" db="EMBL/GenBank/DDBJ databases">
        <title>Complete sequence of chromosome 1 of Nocardioides sp. JS614.</title>
        <authorList>
            <person name="Copeland A."/>
            <person name="Lucas S."/>
            <person name="Lapidus A."/>
            <person name="Barry K."/>
            <person name="Detter J.C."/>
            <person name="Glavina del Rio T."/>
            <person name="Hammon N."/>
            <person name="Israni S."/>
            <person name="Dalin E."/>
            <person name="Tice H."/>
            <person name="Pitluck S."/>
            <person name="Thompson L.S."/>
            <person name="Brettin T."/>
            <person name="Bruce D."/>
            <person name="Han C."/>
            <person name="Tapia R."/>
            <person name="Schmutz J."/>
            <person name="Larimer F."/>
            <person name="Land M."/>
            <person name="Hauser L."/>
            <person name="Kyrpides N."/>
            <person name="Kim E."/>
            <person name="Mattes T."/>
            <person name="Gossett J."/>
            <person name="Richardson P."/>
        </authorList>
    </citation>
    <scope>NUCLEOTIDE SEQUENCE [LARGE SCALE GENOMIC DNA]</scope>
    <source>
        <strain>ATCC BAA-499 / JS614</strain>
    </source>
</reference>
<gene>
    <name evidence="1" type="primary">rplF</name>
    <name type="ordered locus">Noca_3890</name>
</gene>
<sequence length="179" mass="19158">MSRIGKLPVAVPSGVDVAIDGARVTVKGPKGTLSHTVAAPITVEKGDGVLDVKRPDDERESKALHGLTRTLVNNMVVGVTEGYEKKLEIVGVGYRVLSKGPTQLEFQLGYSHPITFNAPEGITFAVEGPTRLGVQGIDKQLVGEVAANIRKLRKPEPYKGKGVRYAGEHIRRKVGKAGK</sequence>
<keyword id="KW-1185">Reference proteome</keyword>
<keyword id="KW-0687">Ribonucleoprotein</keyword>
<keyword id="KW-0689">Ribosomal protein</keyword>
<keyword id="KW-0694">RNA-binding</keyword>
<keyword id="KW-0699">rRNA-binding</keyword>
<accession>A1SNK3</accession>
<organism>
    <name type="scientific">Nocardioides sp. (strain ATCC BAA-499 / JS614)</name>
    <dbReference type="NCBI Taxonomy" id="196162"/>
    <lineage>
        <taxon>Bacteria</taxon>
        <taxon>Bacillati</taxon>
        <taxon>Actinomycetota</taxon>
        <taxon>Actinomycetes</taxon>
        <taxon>Propionibacteriales</taxon>
        <taxon>Nocardioidaceae</taxon>
        <taxon>Nocardioides</taxon>
    </lineage>
</organism>
<dbReference type="EMBL" id="CP000509">
    <property type="protein sequence ID" value="ABL83388.1"/>
    <property type="molecule type" value="Genomic_DNA"/>
</dbReference>
<dbReference type="RefSeq" id="WP_011757319.1">
    <property type="nucleotide sequence ID" value="NC_008699.1"/>
</dbReference>
<dbReference type="SMR" id="A1SNK3"/>
<dbReference type="STRING" id="196162.Noca_3890"/>
<dbReference type="KEGG" id="nca:Noca_3890"/>
<dbReference type="eggNOG" id="COG0097">
    <property type="taxonomic scope" value="Bacteria"/>
</dbReference>
<dbReference type="HOGENOM" id="CLU_065464_1_2_11"/>
<dbReference type="OrthoDB" id="9805007at2"/>
<dbReference type="Proteomes" id="UP000000640">
    <property type="component" value="Chromosome"/>
</dbReference>
<dbReference type="GO" id="GO:0022625">
    <property type="term" value="C:cytosolic large ribosomal subunit"/>
    <property type="evidence" value="ECO:0007669"/>
    <property type="project" value="TreeGrafter"/>
</dbReference>
<dbReference type="GO" id="GO:0019843">
    <property type="term" value="F:rRNA binding"/>
    <property type="evidence" value="ECO:0007669"/>
    <property type="project" value="UniProtKB-UniRule"/>
</dbReference>
<dbReference type="GO" id="GO:0003735">
    <property type="term" value="F:structural constituent of ribosome"/>
    <property type="evidence" value="ECO:0007669"/>
    <property type="project" value="InterPro"/>
</dbReference>
<dbReference type="GO" id="GO:0002181">
    <property type="term" value="P:cytoplasmic translation"/>
    <property type="evidence" value="ECO:0007669"/>
    <property type="project" value="TreeGrafter"/>
</dbReference>
<dbReference type="FunFam" id="3.90.930.12:FF:000001">
    <property type="entry name" value="50S ribosomal protein L6"/>
    <property type="match status" value="1"/>
</dbReference>
<dbReference type="FunFam" id="3.90.930.12:FF:000002">
    <property type="entry name" value="50S ribosomal protein L6"/>
    <property type="match status" value="1"/>
</dbReference>
<dbReference type="Gene3D" id="3.90.930.12">
    <property type="entry name" value="Ribosomal protein L6, alpha-beta domain"/>
    <property type="match status" value="2"/>
</dbReference>
<dbReference type="HAMAP" id="MF_01365_B">
    <property type="entry name" value="Ribosomal_uL6_B"/>
    <property type="match status" value="1"/>
</dbReference>
<dbReference type="InterPro" id="IPR000702">
    <property type="entry name" value="Ribosomal_uL6-like"/>
</dbReference>
<dbReference type="InterPro" id="IPR036789">
    <property type="entry name" value="Ribosomal_uL6-like_a/b-dom_sf"/>
</dbReference>
<dbReference type="InterPro" id="IPR020040">
    <property type="entry name" value="Ribosomal_uL6_a/b-dom"/>
</dbReference>
<dbReference type="InterPro" id="IPR019906">
    <property type="entry name" value="Ribosomal_uL6_bac-type"/>
</dbReference>
<dbReference type="InterPro" id="IPR002358">
    <property type="entry name" value="Ribosomal_uL6_CS"/>
</dbReference>
<dbReference type="NCBIfam" id="TIGR03654">
    <property type="entry name" value="L6_bact"/>
    <property type="match status" value="1"/>
</dbReference>
<dbReference type="PANTHER" id="PTHR11655">
    <property type="entry name" value="60S/50S RIBOSOMAL PROTEIN L6/L9"/>
    <property type="match status" value="1"/>
</dbReference>
<dbReference type="PANTHER" id="PTHR11655:SF14">
    <property type="entry name" value="LARGE RIBOSOMAL SUBUNIT PROTEIN UL6M"/>
    <property type="match status" value="1"/>
</dbReference>
<dbReference type="Pfam" id="PF00347">
    <property type="entry name" value="Ribosomal_L6"/>
    <property type="match status" value="2"/>
</dbReference>
<dbReference type="PIRSF" id="PIRSF002162">
    <property type="entry name" value="Ribosomal_L6"/>
    <property type="match status" value="1"/>
</dbReference>
<dbReference type="PRINTS" id="PR00059">
    <property type="entry name" value="RIBOSOMALL6"/>
</dbReference>
<dbReference type="SUPFAM" id="SSF56053">
    <property type="entry name" value="Ribosomal protein L6"/>
    <property type="match status" value="2"/>
</dbReference>
<dbReference type="PROSITE" id="PS00525">
    <property type="entry name" value="RIBOSOMAL_L6_1"/>
    <property type="match status" value="1"/>
</dbReference>
<proteinExistence type="inferred from homology"/>
<protein>
    <recommendedName>
        <fullName evidence="1">Large ribosomal subunit protein uL6</fullName>
    </recommendedName>
    <alternativeName>
        <fullName evidence="2">50S ribosomal protein L6</fullName>
    </alternativeName>
</protein>
<name>RL6_NOCSJ</name>
<comment type="function">
    <text evidence="1">This protein binds to the 23S rRNA, and is important in its secondary structure. It is located near the subunit interface in the base of the L7/L12 stalk, and near the tRNA binding site of the peptidyltransferase center.</text>
</comment>
<comment type="subunit">
    <text evidence="1">Part of the 50S ribosomal subunit.</text>
</comment>
<comment type="similarity">
    <text evidence="1">Belongs to the universal ribosomal protein uL6 family.</text>
</comment>